<sequence length="236" mass="25805">MSEQDATALVLFSGGQDSTTCLAWALDRFARVETIGFSYGQRHGIELDCRARLRDGIAQLRADWADKLGCEHTLDIPTLAAISETALTRDVAIEMGADGLPNTFVPGRNLVFLTFAAALAYRRGIRHIVGGMCETDYSGYPDCRDETIKALQVALSLGMARPFELHTPLMWLTKAATWQLAHDLGGRGLVDLIRDESHTCYLGERGARHDWGHGCGRCPACELRAHGWRAYVGGGA</sequence>
<proteinExistence type="inferred from homology"/>
<accession>A4YUN8</accession>
<feature type="chain" id="PRO_0000336898" description="7-cyano-7-deazaguanine synthase">
    <location>
        <begin position="1"/>
        <end position="236"/>
    </location>
</feature>
<feature type="binding site" evidence="1">
    <location>
        <begin position="12"/>
        <end position="22"/>
    </location>
    <ligand>
        <name>ATP</name>
        <dbReference type="ChEBI" id="CHEBI:30616"/>
    </ligand>
</feature>
<feature type="binding site" evidence="1">
    <location>
        <position position="200"/>
    </location>
    <ligand>
        <name>Zn(2+)</name>
        <dbReference type="ChEBI" id="CHEBI:29105"/>
    </ligand>
</feature>
<feature type="binding site" evidence="1">
    <location>
        <position position="215"/>
    </location>
    <ligand>
        <name>Zn(2+)</name>
        <dbReference type="ChEBI" id="CHEBI:29105"/>
    </ligand>
</feature>
<feature type="binding site" evidence="1">
    <location>
        <position position="218"/>
    </location>
    <ligand>
        <name>Zn(2+)</name>
        <dbReference type="ChEBI" id="CHEBI:29105"/>
    </ligand>
</feature>
<feature type="binding site" evidence="1">
    <location>
        <position position="221"/>
    </location>
    <ligand>
        <name>Zn(2+)</name>
        <dbReference type="ChEBI" id="CHEBI:29105"/>
    </ligand>
</feature>
<keyword id="KW-0067">ATP-binding</keyword>
<keyword id="KW-0436">Ligase</keyword>
<keyword id="KW-0479">Metal-binding</keyword>
<keyword id="KW-0547">Nucleotide-binding</keyword>
<keyword id="KW-0671">Queuosine biosynthesis</keyword>
<keyword id="KW-1185">Reference proteome</keyword>
<keyword id="KW-0862">Zinc</keyword>
<dbReference type="EC" id="6.3.4.20" evidence="1"/>
<dbReference type="EMBL" id="CU234118">
    <property type="protein sequence ID" value="CAL77614.1"/>
    <property type="status" value="ALT_INIT"/>
    <property type="molecule type" value="Genomic_DNA"/>
</dbReference>
<dbReference type="RefSeq" id="WP_041756676.1">
    <property type="nucleotide sequence ID" value="NC_009445.1"/>
</dbReference>
<dbReference type="SMR" id="A4YUN8"/>
<dbReference type="STRING" id="114615.BRADO3849"/>
<dbReference type="KEGG" id="bra:BRADO3849"/>
<dbReference type="eggNOG" id="COG0603">
    <property type="taxonomic scope" value="Bacteria"/>
</dbReference>
<dbReference type="HOGENOM" id="CLU_081854_0_0_5"/>
<dbReference type="OrthoDB" id="9789567at2"/>
<dbReference type="UniPathway" id="UPA00391"/>
<dbReference type="Proteomes" id="UP000001994">
    <property type="component" value="Chromosome"/>
</dbReference>
<dbReference type="GO" id="GO:0005524">
    <property type="term" value="F:ATP binding"/>
    <property type="evidence" value="ECO:0007669"/>
    <property type="project" value="UniProtKB-UniRule"/>
</dbReference>
<dbReference type="GO" id="GO:0016879">
    <property type="term" value="F:ligase activity, forming carbon-nitrogen bonds"/>
    <property type="evidence" value="ECO:0007669"/>
    <property type="project" value="UniProtKB-UniRule"/>
</dbReference>
<dbReference type="GO" id="GO:0008270">
    <property type="term" value="F:zinc ion binding"/>
    <property type="evidence" value="ECO:0007669"/>
    <property type="project" value="UniProtKB-UniRule"/>
</dbReference>
<dbReference type="GO" id="GO:0008616">
    <property type="term" value="P:queuosine biosynthetic process"/>
    <property type="evidence" value="ECO:0007669"/>
    <property type="project" value="UniProtKB-UniRule"/>
</dbReference>
<dbReference type="CDD" id="cd01995">
    <property type="entry name" value="QueC-like"/>
    <property type="match status" value="1"/>
</dbReference>
<dbReference type="Gene3D" id="3.40.50.620">
    <property type="entry name" value="HUPs"/>
    <property type="match status" value="1"/>
</dbReference>
<dbReference type="HAMAP" id="MF_01633">
    <property type="entry name" value="QueC"/>
    <property type="match status" value="1"/>
</dbReference>
<dbReference type="InterPro" id="IPR018317">
    <property type="entry name" value="QueC"/>
</dbReference>
<dbReference type="InterPro" id="IPR014729">
    <property type="entry name" value="Rossmann-like_a/b/a_fold"/>
</dbReference>
<dbReference type="NCBIfam" id="TIGR00364">
    <property type="entry name" value="7-cyano-7-deazaguanine synthase QueC"/>
    <property type="match status" value="1"/>
</dbReference>
<dbReference type="PANTHER" id="PTHR42914">
    <property type="entry name" value="7-CYANO-7-DEAZAGUANINE SYNTHASE"/>
    <property type="match status" value="1"/>
</dbReference>
<dbReference type="PANTHER" id="PTHR42914:SF1">
    <property type="entry name" value="7-CYANO-7-DEAZAGUANINE SYNTHASE"/>
    <property type="match status" value="1"/>
</dbReference>
<dbReference type="Pfam" id="PF06508">
    <property type="entry name" value="QueC"/>
    <property type="match status" value="1"/>
</dbReference>
<dbReference type="PIRSF" id="PIRSF006293">
    <property type="entry name" value="ExsB"/>
    <property type="match status" value="1"/>
</dbReference>
<dbReference type="SUPFAM" id="SSF52402">
    <property type="entry name" value="Adenine nucleotide alpha hydrolases-like"/>
    <property type="match status" value="1"/>
</dbReference>
<name>QUEC_BRASO</name>
<organism>
    <name type="scientific">Bradyrhizobium sp. (strain ORS 278)</name>
    <dbReference type="NCBI Taxonomy" id="114615"/>
    <lineage>
        <taxon>Bacteria</taxon>
        <taxon>Pseudomonadati</taxon>
        <taxon>Pseudomonadota</taxon>
        <taxon>Alphaproteobacteria</taxon>
        <taxon>Hyphomicrobiales</taxon>
        <taxon>Nitrobacteraceae</taxon>
        <taxon>Bradyrhizobium</taxon>
    </lineage>
</organism>
<gene>
    <name evidence="1" type="primary">queC</name>
    <name type="ordered locus">BRADO3849</name>
</gene>
<comment type="function">
    <text evidence="1">Catalyzes the ATP-dependent conversion of 7-carboxy-7-deazaguanine (CDG) to 7-cyano-7-deazaguanine (preQ(0)).</text>
</comment>
<comment type="catalytic activity">
    <reaction evidence="1">
        <text>7-carboxy-7-deazaguanine + NH4(+) + ATP = 7-cyano-7-deazaguanine + ADP + phosphate + H2O + H(+)</text>
        <dbReference type="Rhea" id="RHEA:27982"/>
        <dbReference type="ChEBI" id="CHEBI:15377"/>
        <dbReference type="ChEBI" id="CHEBI:15378"/>
        <dbReference type="ChEBI" id="CHEBI:28938"/>
        <dbReference type="ChEBI" id="CHEBI:30616"/>
        <dbReference type="ChEBI" id="CHEBI:43474"/>
        <dbReference type="ChEBI" id="CHEBI:45075"/>
        <dbReference type="ChEBI" id="CHEBI:61036"/>
        <dbReference type="ChEBI" id="CHEBI:456216"/>
        <dbReference type="EC" id="6.3.4.20"/>
    </reaction>
</comment>
<comment type="cofactor">
    <cofactor evidence="1">
        <name>Zn(2+)</name>
        <dbReference type="ChEBI" id="CHEBI:29105"/>
    </cofactor>
    <text evidence="1">Binds 1 zinc ion per subunit.</text>
</comment>
<comment type="pathway">
    <text evidence="1">Purine metabolism; 7-cyano-7-deazaguanine biosynthesis.</text>
</comment>
<comment type="similarity">
    <text evidence="1">Belongs to the QueC family.</text>
</comment>
<comment type="sequence caution" evidence="2">
    <conflict type="erroneous initiation">
        <sequence resource="EMBL-CDS" id="CAL77614"/>
    </conflict>
</comment>
<reference key="1">
    <citation type="journal article" date="2007" name="Science">
        <title>Legumes symbioses: absence of nod genes in photosynthetic bradyrhizobia.</title>
        <authorList>
            <person name="Giraud E."/>
            <person name="Moulin L."/>
            <person name="Vallenet D."/>
            <person name="Barbe V."/>
            <person name="Cytryn E."/>
            <person name="Avarre J.-C."/>
            <person name="Jaubert M."/>
            <person name="Simon D."/>
            <person name="Cartieaux F."/>
            <person name="Prin Y."/>
            <person name="Bena G."/>
            <person name="Hannibal L."/>
            <person name="Fardoux J."/>
            <person name="Kojadinovic M."/>
            <person name="Vuillet L."/>
            <person name="Lajus A."/>
            <person name="Cruveiller S."/>
            <person name="Rouy Z."/>
            <person name="Mangenot S."/>
            <person name="Segurens B."/>
            <person name="Dossat C."/>
            <person name="Franck W.L."/>
            <person name="Chang W.-S."/>
            <person name="Saunders E."/>
            <person name="Bruce D."/>
            <person name="Richardson P."/>
            <person name="Normand P."/>
            <person name="Dreyfus B."/>
            <person name="Pignol D."/>
            <person name="Stacey G."/>
            <person name="Emerich D."/>
            <person name="Vermeglio A."/>
            <person name="Medigue C."/>
            <person name="Sadowsky M."/>
        </authorList>
    </citation>
    <scope>NUCLEOTIDE SEQUENCE [LARGE SCALE GENOMIC DNA]</scope>
    <source>
        <strain>ORS 278</strain>
    </source>
</reference>
<evidence type="ECO:0000255" key="1">
    <source>
        <dbReference type="HAMAP-Rule" id="MF_01633"/>
    </source>
</evidence>
<evidence type="ECO:0000305" key="2"/>
<protein>
    <recommendedName>
        <fullName evidence="1">7-cyano-7-deazaguanine synthase</fullName>
        <ecNumber evidence="1">6.3.4.20</ecNumber>
    </recommendedName>
    <alternativeName>
        <fullName evidence="1">7-cyano-7-carbaguanine synthase</fullName>
    </alternativeName>
    <alternativeName>
        <fullName evidence="1">PreQ(0) synthase</fullName>
    </alternativeName>
    <alternativeName>
        <fullName evidence="1">Queuosine biosynthesis protein QueC</fullName>
    </alternativeName>
</protein>